<accession>P32152</accession>
<accession>Q2M8J4</accession>
<comment type="function">
    <text>Could be involved in the regulation of the transcription of the FRV operon.</text>
</comment>
<comment type="domain">
    <text>The PTS EIIA type-2 domain may serve a regulatory function, through its phosphorylation activity.</text>
</comment>
<proteinExistence type="inferred from homology"/>
<organism>
    <name type="scientific">Escherichia coli (strain K12)</name>
    <dbReference type="NCBI Taxonomy" id="83333"/>
    <lineage>
        <taxon>Bacteria</taxon>
        <taxon>Pseudomonadati</taxon>
        <taxon>Pseudomonadota</taxon>
        <taxon>Gammaproteobacteria</taxon>
        <taxon>Enterobacterales</taxon>
        <taxon>Enterobacteriaceae</taxon>
        <taxon>Escherichia</taxon>
    </lineage>
</organism>
<protein>
    <recommendedName>
        <fullName>Putative frv operon regulatory protein</fullName>
    </recommendedName>
    <domain>
        <recommendedName>
            <fullName>Putative phosphotransferase EIIA component</fullName>
            <ecNumber>2.7.1.-</ecNumber>
        </recommendedName>
        <alternativeName>
            <fullName>Putative PTS system EIIA component</fullName>
        </alternativeName>
    </domain>
</protein>
<gene>
    <name type="primary">frvR</name>
    <name type="synonym">yiiH</name>
    <name type="ordered locus">b3897</name>
    <name type="ordered locus">JW3868</name>
</gene>
<evidence type="ECO:0000250" key="1"/>
<evidence type="ECO:0000255" key="2">
    <source>
        <dbReference type="PROSITE-ProRule" id="PRU00417"/>
    </source>
</evidence>
<reference key="1">
    <citation type="journal article" date="1993" name="Nucleic Acids Res.">
        <title>Analysis of the Escherichia coli genome. III. DNA sequence of the region from 87.2 to 89.2 minutes.</title>
        <authorList>
            <person name="Plunkett G. III"/>
            <person name="Burland V."/>
            <person name="Daniels D.L."/>
            <person name="Blattner F.R."/>
        </authorList>
    </citation>
    <scope>NUCLEOTIDE SEQUENCE [LARGE SCALE GENOMIC DNA]</scope>
    <source>
        <strain>K12 / MG1655 / ATCC 47076</strain>
    </source>
</reference>
<reference key="2">
    <citation type="journal article" date="1997" name="Science">
        <title>The complete genome sequence of Escherichia coli K-12.</title>
        <authorList>
            <person name="Blattner F.R."/>
            <person name="Plunkett G. III"/>
            <person name="Bloch C.A."/>
            <person name="Perna N.T."/>
            <person name="Burland V."/>
            <person name="Riley M."/>
            <person name="Collado-Vides J."/>
            <person name="Glasner J.D."/>
            <person name="Rode C.K."/>
            <person name="Mayhew G.F."/>
            <person name="Gregor J."/>
            <person name="Davis N.W."/>
            <person name="Kirkpatrick H.A."/>
            <person name="Goeden M.A."/>
            <person name="Rose D.J."/>
            <person name="Mau B."/>
            <person name="Shao Y."/>
        </authorList>
    </citation>
    <scope>NUCLEOTIDE SEQUENCE [LARGE SCALE GENOMIC DNA]</scope>
    <source>
        <strain>K12 / MG1655 / ATCC 47076</strain>
    </source>
</reference>
<reference key="3">
    <citation type="journal article" date="2006" name="Mol. Syst. Biol.">
        <title>Highly accurate genome sequences of Escherichia coli K-12 strains MG1655 and W3110.</title>
        <authorList>
            <person name="Hayashi K."/>
            <person name="Morooka N."/>
            <person name="Yamamoto Y."/>
            <person name="Fujita K."/>
            <person name="Isono K."/>
            <person name="Choi S."/>
            <person name="Ohtsubo E."/>
            <person name="Baba T."/>
            <person name="Wanner B.L."/>
            <person name="Mori H."/>
            <person name="Horiuchi T."/>
        </authorList>
    </citation>
    <scope>NUCLEOTIDE SEQUENCE [LARGE SCALE GENOMIC DNA]</scope>
    <source>
        <strain>K12 / W3110 / ATCC 27325 / DSM 5911</strain>
    </source>
</reference>
<reference key="4">
    <citation type="journal article" date="1994" name="Protein Sci.">
        <title>Novel phosphotransferase system genes revealed by bacterial genome analysis: unique, putative fructose- and glucoside-specific systems.</title>
        <authorList>
            <person name="Reizer J."/>
            <person name="Michotey V."/>
            <person name="Reizer A."/>
            <person name="Saier M.H. Jr."/>
        </authorList>
    </citation>
    <scope>DISCUSSION OF SEQUENCE</scope>
</reference>
<feature type="chain" id="PRO_0000087349" description="Putative frv operon regulatory protein">
    <location>
        <begin position="1"/>
        <end position="582"/>
    </location>
</feature>
<feature type="domain" description="PTS EIIA type-2" evidence="2">
    <location>
        <begin position="443"/>
        <end position="582"/>
    </location>
</feature>
<feature type="DNA-binding region" description="H-T-H motif" evidence="1">
    <location>
        <begin position="20"/>
        <end position="39"/>
    </location>
</feature>
<feature type="modified residue" description="Phosphohistidine; by HPr" evidence="1">
    <location>
        <position position="505"/>
    </location>
</feature>
<dbReference type="EC" id="2.7.1.-"/>
<dbReference type="EMBL" id="L19201">
    <property type="protein sequence ID" value="AAB03030.1"/>
    <property type="molecule type" value="Genomic_DNA"/>
</dbReference>
<dbReference type="EMBL" id="U00096">
    <property type="protein sequence ID" value="AAC76879.1"/>
    <property type="molecule type" value="Genomic_DNA"/>
</dbReference>
<dbReference type="EMBL" id="AP009048">
    <property type="protein sequence ID" value="BAE77412.1"/>
    <property type="molecule type" value="Genomic_DNA"/>
</dbReference>
<dbReference type="PIR" id="S40841">
    <property type="entry name" value="S40841"/>
</dbReference>
<dbReference type="RefSeq" id="NP_418333.1">
    <property type="nucleotide sequence ID" value="NC_000913.3"/>
</dbReference>
<dbReference type="RefSeq" id="WP_000931299.1">
    <property type="nucleotide sequence ID" value="NZ_SSZK01000026.1"/>
</dbReference>
<dbReference type="SMR" id="P32152"/>
<dbReference type="BioGRID" id="4263326">
    <property type="interactions" value="149"/>
</dbReference>
<dbReference type="FunCoup" id="P32152">
    <property type="interactions" value="54"/>
</dbReference>
<dbReference type="IntAct" id="P32152">
    <property type="interactions" value="1"/>
</dbReference>
<dbReference type="STRING" id="511145.b3897"/>
<dbReference type="PaxDb" id="511145-b3897"/>
<dbReference type="EnsemblBacteria" id="AAC76879">
    <property type="protein sequence ID" value="AAC76879"/>
    <property type="gene ID" value="b3897"/>
</dbReference>
<dbReference type="GeneID" id="948389"/>
<dbReference type="KEGG" id="ecj:JW3868"/>
<dbReference type="KEGG" id="eco:b3897"/>
<dbReference type="KEGG" id="ecoc:C3026_21070"/>
<dbReference type="PATRIC" id="fig|1411691.4.peg.2810"/>
<dbReference type="EchoBASE" id="EB1807"/>
<dbReference type="eggNOG" id="COG1762">
    <property type="taxonomic scope" value="Bacteria"/>
</dbReference>
<dbReference type="eggNOG" id="COG3711">
    <property type="taxonomic scope" value="Bacteria"/>
</dbReference>
<dbReference type="HOGENOM" id="CLU_033613_1_0_6"/>
<dbReference type="InParanoid" id="P32152"/>
<dbReference type="OMA" id="TTACEKQ"/>
<dbReference type="OrthoDB" id="2358583at2"/>
<dbReference type="PhylomeDB" id="P32152"/>
<dbReference type="BioCyc" id="EcoCyc:EG11861-MONOMER"/>
<dbReference type="PRO" id="PR:P32152"/>
<dbReference type="Proteomes" id="UP000000625">
    <property type="component" value="Chromosome"/>
</dbReference>
<dbReference type="GO" id="GO:0003677">
    <property type="term" value="F:DNA binding"/>
    <property type="evidence" value="ECO:0007669"/>
    <property type="project" value="UniProtKB-KW"/>
</dbReference>
<dbReference type="GO" id="GO:0016301">
    <property type="term" value="F:kinase activity"/>
    <property type="evidence" value="ECO:0007669"/>
    <property type="project" value="UniProtKB-KW"/>
</dbReference>
<dbReference type="CDD" id="cd00211">
    <property type="entry name" value="PTS_IIA_fru"/>
    <property type="match status" value="1"/>
</dbReference>
<dbReference type="Gene3D" id="3.40.930.10">
    <property type="entry name" value="Mannitol-specific EII, Chain A"/>
    <property type="match status" value="1"/>
</dbReference>
<dbReference type="Gene3D" id="1.10.10.10">
    <property type="entry name" value="Winged helix-like DNA-binding domain superfamily/Winged helix DNA-binding domain"/>
    <property type="match status" value="1"/>
</dbReference>
<dbReference type="InterPro" id="IPR050661">
    <property type="entry name" value="BglG_antiterminators"/>
</dbReference>
<dbReference type="InterPro" id="IPR013196">
    <property type="entry name" value="HTH_11"/>
</dbReference>
<dbReference type="InterPro" id="IPR016152">
    <property type="entry name" value="PTrfase/Anion_transptr"/>
</dbReference>
<dbReference type="InterPro" id="IPR002178">
    <property type="entry name" value="PTS_EIIA_type-2_dom"/>
</dbReference>
<dbReference type="InterPro" id="IPR036388">
    <property type="entry name" value="WH-like_DNA-bd_sf"/>
</dbReference>
<dbReference type="InterPro" id="IPR036390">
    <property type="entry name" value="WH_DNA-bd_sf"/>
</dbReference>
<dbReference type="NCBIfam" id="NF007366">
    <property type="entry name" value="PRK09863.1"/>
    <property type="match status" value="1"/>
</dbReference>
<dbReference type="PANTHER" id="PTHR30185">
    <property type="entry name" value="CRYPTIC BETA-GLUCOSIDE BGL OPERON ANTITERMINATOR"/>
    <property type="match status" value="1"/>
</dbReference>
<dbReference type="PANTHER" id="PTHR30185:SF14">
    <property type="entry name" value="STATIONARY PHASE-INDUCIBLE PROTEIN CSIE-RELATED"/>
    <property type="match status" value="1"/>
</dbReference>
<dbReference type="Pfam" id="PF08279">
    <property type="entry name" value="HTH_11"/>
    <property type="match status" value="1"/>
</dbReference>
<dbReference type="Pfam" id="PF00359">
    <property type="entry name" value="PTS_EIIA_2"/>
    <property type="match status" value="1"/>
</dbReference>
<dbReference type="SUPFAM" id="SSF55804">
    <property type="entry name" value="Phoshotransferase/anion transport protein"/>
    <property type="match status" value="1"/>
</dbReference>
<dbReference type="SUPFAM" id="SSF46785">
    <property type="entry name" value="Winged helix' DNA-binding domain"/>
    <property type="match status" value="1"/>
</dbReference>
<dbReference type="PROSITE" id="PS51094">
    <property type="entry name" value="PTS_EIIA_TYPE_2"/>
    <property type="match status" value="1"/>
</dbReference>
<sequence length="582" mass="66000">MLNERQLKIVDLLEQQPRTPGELAQQTGVSGRTILRDIDYLNFTLNGKARIFASGSAGYQLEIFERRSFFQLLQKHDNDDRLLALLLLNTFTPRAQLASALNLPETWVAERLPRLKQRYERTCCLASRPGLGHFIDETEEKRVILLANLLRKDPFLIPLAGITRDNLQHLSTACDNQHRWPLMQGDYLSSLILAIYALRNQLTDEWPQYPGDEIKQIVEHSGLFLGDNAVRTLTGLIEKQHQQAQVISADNVQGLLQRVPGIASLNIIDAQLVENITGHLLRCLAAPVWIAEHRQSSMNNLKAAWPAAFDMSLHFITLLREQLDIPLFDSDLIGLYFACALERHQNERQPIILLSDQNAIATINQLAIERDVLNCRVIIARSLSELVAIREEIEPLLIINNSHYLLDDAVNNYITVKNIITAAGIEQIKHFLATAFIRQQPERFFSAPGSFHYSNVRGESWQHITRQICAQLVAQHHITADEAQRIIAREGEGENLIVNRLAIPHCWSEQERRFRGFFITLAQPVEVNNEVINHVLIACAAADARHELKIFSYLASILCQHPAEIIAGLTGYEAFMELLHKG</sequence>
<keyword id="KW-0238">DNA-binding</keyword>
<keyword id="KW-0418">Kinase</keyword>
<keyword id="KW-0597">Phosphoprotein</keyword>
<keyword id="KW-1185">Reference proteome</keyword>
<keyword id="KW-0804">Transcription</keyword>
<keyword id="KW-0805">Transcription regulation</keyword>
<keyword id="KW-0808">Transferase</keyword>
<name>FRVR_ECOLI</name>